<sequence length="37" mass="4323">MKVRPSVKPMCEKCKVIRRKGKVMVICENPKHKQKQG</sequence>
<proteinExistence type="inferred from homology"/>
<organism>
    <name type="scientific">Listeria innocua serovar 6a (strain ATCC BAA-680 / CLIP 11262)</name>
    <dbReference type="NCBI Taxonomy" id="272626"/>
    <lineage>
        <taxon>Bacteria</taxon>
        <taxon>Bacillati</taxon>
        <taxon>Bacillota</taxon>
        <taxon>Bacilli</taxon>
        <taxon>Bacillales</taxon>
        <taxon>Listeriaceae</taxon>
        <taxon>Listeria</taxon>
    </lineage>
</organism>
<accession>P66291</accession>
<accession>Q927N0</accession>
<reference key="1">
    <citation type="journal article" date="2001" name="Science">
        <title>Comparative genomics of Listeria species.</title>
        <authorList>
            <person name="Glaser P."/>
            <person name="Frangeul L."/>
            <person name="Buchrieser C."/>
            <person name="Rusniok C."/>
            <person name="Amend A."/>
            <person name="Baquero F."/>
            <person name="Berche P."/>
            <person name="Bloecker H."/>
            <person name="Brandt P."/>
            <person name="Chakraborty T."/>
            <person name="Charbit A."/>
            <person name="Chetouani F."/>
            <person name="Couve E."/>
            <person name="de Daruvar A."/>
            <person name="Dehoux P."/>
            <person name="Domann E."/>
            <person name="Dominguez-Bernal G."/>
            <person name="Duchaud E."/>
            <person name="Durant L."/>
            <person name="Dussurget O."/>
            <person name="Entian K.-D."/>
            <person name="Fsihi H."/>
            <person name="Garcia-del Portillo F."/>
            <person name="Garrido P."/>
            <person name="Gautier L."/>
            <person name="Goebel W."/>
            <person name="Gomez-Lopez N."/>
            <person name="Hain T."/>
            <person name="Hauf J."/>
            <person name="Jackson D."/>
            <person name="Jones L.-M."/>
            <person name="Kaerst U."/>
            <person name="Kreft J."/>
            <person name="Kuhn M."/>
            <person name="Kunst F."/>
            <person name="Kurapkat G."/>
            <person name="Madueno E."/>
            <person name="Maitournam A."/>
            <person name="Mata Vicente J."/>
            <person name="Ng E."/>
            <person name="Nedjari H."/>
            <person name="Nordsiek G."/>
            <person name="Novella S."/>
            <person name="de Pablos B."/>
            <person name="Perez-Diaz J.-C."/>
            <person name="Purcell R."/>
            <person name="Remmel B."/>
            <person name="Rose M."/>
            <person name="Schlueter T."/>
            <person name="Simoes N."/>
            <person name="Tierrez A."/>
            <person name="Vazquez-Boland J.-A."/>
            <person name="Voss H."/>
            <person name="Wehland J."/>
            <person name="Cossart P."/>
        </authorList>
    </citation>
    <scope>NUCLEOTIDE SEQUENCE [LARGE SCALE GENOMIC DNA]</scope>
    <source>
        <strain>ATCC BAA-680 / CLIP 11262</strain>
    </source>
</reference>
<protein>
    <recommendedName>
        <fullName evidence="1">Large ribosomal subunit protein bL36</fullName>
    </recommendedName>
    <alternativeName>
        <fullName evidence="2">50S ribosomal protein L36</fullName>
    </alternativeName>
</protein>
<gene>
    <name evidence="1" type="primary">rpmJ</name>
    <name type="ordered locus">lin2758</name>
</gene>
<keyword id="KW-0687">Ribonucleoprotein</keyword>
<keyword id="KW-0689">Ribosomal protein</keyword>
<feature type="chain" id="PRO_0000126206" description="Large ribosomal subunit protein bL36">
    <location>
        <begin position="1"/>
        <end position="37"/>
    </location>
</feature>
<evidence type="ECO:0000255" key="1">
    <source>
        <dbReference type="HAMAP-Rule" id="MF_00251"/>
    </source>
</evidence>
<evidence type="ECO:0000305" key="2"/>
<comment type="similarity">
    <text evidence="1">Belongs to the bacterial ribosomal protein bL36 family.</text>
</comment>
<dbReference type="EMBL" id="AL596173">
    <property type="protein sequence ID" value="CAC97984.1"/>
    <property type="molecule type" value="Genomic_DNA"/>
</dbReference>
<dbReference type="PIR" id="AH1776">
    <property type="entry name" value="AH1776"/>
</dbReference>
<dbReference type="RefSeq" id="WP_003720928.1">
    <property type="nucleotide sequence ID" value="NC_003212.1"/>
</dbReference>
<dbReference type="SMR" id="P66291"/>
<dbReference type="STRING" id="272626.gene:17567145"/>
<dbReference type="GeneID" id="93240490"/>
<dbReference type="KEGG" id="lin:rpmJ"/>
<dbReference type="eggNOG" id="COG0257">
    <property type="taxonomic scope" value="Bacteria"/>
</dbReference>
<dbReference type="HOGENOM" id="CLU_135723_6_2_9"/>
<dbReference type="OrthoDB" id="9802520at2"/>
<dbReference type="Proteomes" id="UP000002513">
    <property type="component" value="Chromosome"/>
</dbReference>
<dbReference type="GO" id="GO:0005737">
    <property type="term" value="C:cytoplasm"/>
    <property type="evidence" value="ECO:0007669"/>
    <property type="project" value="UniProtKB-ARBA"/>
</dbReference>
<dbReference type="GO" id="GO:1990904">
    <property type="term" value="C:ribonucleoprotein complex"/>
    <property type="evidence" value="ECO:0007669"/>
    <property type="project" value="UniProtKB-KW"/>
</dbReference>
<dbReference type="GO" id="GO:0005840">
    <property type="term" value="C:ribosome"/>
    <property type="evidence" value="ECO:0007669"/>
    <property type="project" value="UniProtKB-KW"/>
</dbReference>
<dbReference type="GO" id="GO:0003735">
    <property type="term" value="F:structural constituent of ribosome"/>
    <property type="evidence" value="ECO:0007669"/>
    <property type="project" value="InterPro"/>
</dbReference>
<dbReference type="GO" id="GO:0006412">
    <property type="term" value="P:translation"/>
    <property type="evidence" value="ECO:0007669"/>
    <property type="project" value="UniProtKB-UniRule"/>
</dbReference>
<dbReference type="HAMAP" id="MF_00251">
    <property type="entry name" value="Ribosomal_bL36"/>
    <property type="match status" value="1"/>
</dbReference>
<dbReference type="InterPro" id="IPR000473">
    <property type="entry name" value="Ribosomal_bL36"/>
</dbReference>
<dbReference type="InterPro" id="IPR035977">
    <property type="entry name" value="Ribosomal_bL36_sp"/>
</dbReference>
<dbReference type="NCBIfam" id="TIGR01022">
    <property type="entry name" value="rpmJ_bact"/>
    <property type="match status" value="1"/>
</dbReference>
<dbReference type="PANTHER" id="PTHR42888">
    <property type="entry name" value="50S RIBOSOMAL PROTEIN L36, CHLOROPLASTIC"/>
    <property type="match status" value="1"/>
</dbReference>
<dbReference type="PANTHER" id="PTHR42888:SF1">
    <property type="entry name" value="LARGE RIBOSOMAL SUBUNIT PROTEIN BL36C"/>
    <property type="match status" value="1"/>
</dbReference>
<dbReference type="Pfam" id="PF00444">
    <property type="entry name" value="Ribosomal_L36"/>
    <property type="match status" value="1"/>
</dbReference>
<dbReference type="SUPFAM" id="SSF57840">
    <property type="entry name" value="Ribosomal protein L36"/>
    <property type="match status" value="1"/>
</dbReference>
<dbReference type="PROSITE" id="PS00828">
    <property type="entry name" value="RIBOSOMAL_L36"/>
    <property type="match status" value="1"/>
</dbReference>
<name>RL36_LISIN</name>